<accession>Q9ZCQ1</accession>
<feature type="chain" id="PRO_0000281100" description="Putative transporter AmpG 2">
    <location>
        <begin position="1"/>
        <end position="408"/>
    </location>
</feature>
<feature type="transmembrane region" description="Helical" evidence="2">
    <location>
        <begin position="11"/>
        <end position="31"/>
    </location>
</feature>
<feature type="transmembrane region" description="Helical" evidence="2">
    <location>
        <begin position="49"/>
        <end position="69"/>
    </location>
</feature>
<feature type="transmembrane region" description="Helical" evidence="2">
    <location>
        <begin position="84"/>
        <end position="104"/>
    </location>
</feature>
<feature type="transmembrane region" description="Helical" evidence="2">
    <location>
        <begin position="110"/>
        <end position="130"/>
    </location>
</feature>
<feature type="transmembrane region" description="Helical" evidence="2">
    <location>
        <begin position="154"/>
        <end position="174"/>
    </location>
</feature>
<feature type="transmembrane region" description="Helical" evidence="2">
    <location>
        <begin position="177"/>
        <end position="197"/>
    </location>
</feature>
<feature type="transmembrane region" description="Helical" evidence="2">
    <location>
        <begin position="224"/>
        <end position="244"/>
    </location>
</feature>
<feature type="transmembrane region" description="Helical" evidence="2">
    <location>
        <begin position="261"/>
        <end position="281"/>
    </location>
</feature>
<feature type="transmembrane region" description="Helical" evidence="2">
    <location>
        <begin position="294"/>
        <end position="311"/>
    </location>
</feature>
<feature type="transmembrane region" description="Helical" evidence="2">
    <location>
        <begin position="353"/>
        <end position="373"/>
    </location>
</feature>
<feature type="transmembrane region" description="Helical" evidence="2">
    <location>
        <begin position="382"/>
        <end position="402"/>
    </location>
</feature>
<comment type="subcellular location">
    <subcellularLocation>
        <location evidence="1">Cell inner membrane</location>
        <topology evidence="1">Multi-pass membrane protein</topology>
    </subcellularLocation>
</comment>
<comment type="similarity">
    <text evidence="3">Belongs to the major facilitator superfamily.</text>
</comment>
<reference key="1">
    <citation type="journal article" date="1998" name="Nature">
        <title>The genome sequence of Rickettsia prowazekii and the origin of mitochondria.</title>
        <authorList>
            <person name="Andersson S.G.E."/>
            <person name="Zomorodipour A."/>
            <person name="Andersson J.O."/>
            <person name="Sicheritz-Ponten T."/>
            <person name="Alsmark U.C.M."/>
            <person name="Podowski R.M."/>
            <person name="Naeslund A.K."/>
            <person name="Eriksson A.-S."/>
            <person name="Winkler H.H."/>
            <person name="Kurland C.G."/>
        </authorList>
    </citation>
    <scope>NUCLEOTIDE SEQUENCE [LARGE SCALE GENOMIC DNA]</scope>
    <source>
        <strain>Madrid E</strain>
    </source>
</reference>
<name>AMPG2_RICPR</name>
<gene>
    <name type="primary">ampG2</name>
    <name type="ordered locus">RP668</name>
</gene>
<proteinExistence type="inferred from homology"/>
<organism>
    <name type="scientific">Rickettsia prowazekii (strain Madrid E)</name>
    <dbReference type="NCBI Taxonomy" id="272947"/>
    <lineage>
        <taxon>Bacteria</taxon>
        <taxon>Pseudomonadati</taxon>
        <taxon>Pseudomonadota</taxon>
        <taxon>Alphaproteobacteria</taxon>
        <taxon>Rickettsiales</taxon>
        <taxon>Rickettsiaceae</taxon>
        <taxon>Rickettsieae</taxon>
        <taxon>Rickettsia</taxon>
        <taxon>typhus group</taxon>
    </lineage>
</organism>
<evidence type="ECO:0000250" key="1"/>
<evidence type="ECO:0000255" key="2"/>
<evidence type="ECO:0000305" key="3"/>
<protein>
    <recommendedName>
        <fullName>Putative transporter AmpG 2</fullName>
    </recommendedName>
</protein>
<dbReference type="EMBL" id="AJ235272">
    <property type="protein sequence ID" value="CAA15106.1"/>
    <property type="molecule type" value="Genomic_DNA"/>
</dbReference>
<dbReference type="PIR" id="H71672">
    <property type="entry name" value="H71672"/>
</dbReference>
<dbReference type="RefSeq" id="NP_221030.2">
    <property type="nucleotide sequence ID" value="NC_000963.1"/>
</dbReference>
<dbReference type="RefSeq" id="WP_010886340.1">
    <property type="nucleotide sequence ID" value="NC_000963.1"/>
</dbReference>
<dbReference type="SMR" id="Q9ZCQ1"/>
<dbReference type="STRING" id="272947.gene:17555745"/>
<dbReference type="EnsemblBacteria" id="CAA15106">
    <property type="protein sequence ID" value="CAA15106"/>
    <property type="gene ID" value="CAA15106"/>
</dbReference>
<dbReference type="KEGG" id="rpr:RP668"/>
<dbReference type="PATRIC" id="fig|272947.5.peg.688"/>
<dbReference type="eggNOG" id="COG2271">
    <property type="taxonomic scope" value="Bacteria"/>
</dbReference>
<dbReference type="HOGENOM" id="CLU_029352_1_2_5"/>
<dbReference type="OrthoDB" id="9787815at2"/>
<dbReference type="Proteomes" id="UP000002480">
    <property type="component" value="Chromosome"/>
</dbReference>
<dbReference type="GO" id="GO:0005886">
    <property type="term" value="C:plasma membrane"/>
    <property type="evidence" value="ECO:0007669"/>
    <property type="project" value="UniProtKB-SubCell"/>
</dbReference>
<dbReference type="GO" id="GO:0022857">
    <property type="term" value="F:transmembrane transporter activity"/>
    <property type="evidence" value="ECO:0007669"/>
    <property type="project" value="InterPro"/>
</dbReference>
<dbReference type="CDD" id="cd17486">
    <property type="entry name" value="MFS_AmpG_like"/>
    <property type="match status" value="1"/>
</dbReference>
<dbReference type="Gene3D" id="1.20.1250.20">
    <property type="entry name" value="MFS general substrate transporter like domains"/>
    <property type="match status" value="2"/>
</dbReference>
<dbReference type="InterPro" id="IPR004752">
    <property type="entry name" value="AmpG_permease/AT-1"/>
</dbReference>
<dbReference type="InterPro" id="IPR011701">
    <property type="entry name" value="MFS"/>
</dbReference>
<dbReference type="InterPro" id="IPR036259">
    <property type="entry name" value="MFS_trans_sf"/>
</dbReference>
<dbReference type="PANTHER" id="PTHR12778:SF10">
    <property type="entry name" value="MAJOR FACILITATOR SUPERFAMILY DOMAIN-CONTAINING PROTEIN 3"/>
    <property type="match status" value="1"/>
</dbReference>
<dbReference type="PANTHER" id="PTHR12778">
    <property type="entry name" value="SOLUTE CARRIER FAMILY 33 ACETYL-COA TRANSPORTER -RELATED"/>
    <property type="match status" value="1"/>
</dbReference>
<dbReference type="Pfam" id="PF07690">
    <property type="entry name" value="MFS_1"/>
    <property type="match status" value="1"/>
</dbReference>
<dbReference type="SUPFAM" id="SSF103473">
    <property type="entry name" value="MFS general substrate transporter"/>
    <property type="match status" value="1"/>
</dbReference>
<sequence>MNFKFARFKSIFNILFILIIAFPGGLIYLLTGSTLSFWLRESDFDKITIGLFGLVNFIHIFKFLWGPLLEKISFSTLSNRGYKYCLVITLINCIFCVYVLTSFNPNTNFIPFVLCLVVLAFFSSIYDMLIQSSQMLLITDKNWGISEAACTTGFRIGILISGSGALYLSTIISWQDVYRTMAILCIPSLLLIIFYPLKFKDKIIDNDFDRFLNAFYDFIKKPKCIVIISFMLLYRLQDSFLSIMPNMFYLDIGYTKQDLAVGYKAFGMCATIFGGVIGGFLCRKYEYSYLLKRVLIYHALSSLSFIYLYFLNQDITSLYIAVFCQEFTKGLTMSPFFSYQLKCCSSRYCITQIALITSITNVGTILIGSISGYAATYLGWSYFFIVAGLCFIPAYILILYLPKTINSV</sequence>
<keyword id="KW-0997">Cell inner membrane</keyword>
<keyword id="KW-1003">Cell membrane</keyword>
<keyword id="KW-0472">Membrane</keyword>
<keyword id="KW-1185">Reference proteome</keyword>
<keyword id="KW-0812">Transmembrane</keyword>
<keyword id="KW-1133">Transmembrane helix</keyword>
<keyword id="KW-0813">Transport</keyword>